<protein>
    <recommendedName>
        <fullName evidence="1">Ion-translocating oxidoreductase complex subunit A</fullName>
        <ecNumber evidence="1">7.-.-.-</ecNumber>
    </recommendedName>
    <alternativeName>
        <fullName evidence="1">Rsx electron transport complex subunit A</fullName>
    </alternativeName>
</protein>
<sequence>MTDYLLLFVGTVLVNNFVLVKFLGLCPFMGVSKKLETAMGMGLATTFVMTLASICAWLIDTWILIPLDLVYLRTLSFILVIAVVVQFTEMVVRKTSPALYRLLGIFLPLITTNCAVLGVALLNINLGHHFLQSALYGFSAAVGFSLVMVLFAAIRERLAVADVPAPFRGNAIALITAGLMSLAFMGFSGLVKL</sequence>
<reference key="1">
    <citation type="submission" date="2007-11" db="EMBL/GenBank/DDBJ databases">
        <authorList>
            <consortium name="The Salmonella enterica serovar Arizonae Genome Sequencing Project"/>
            <person name="McClelland M."/>
            <person name="Sanderson E.K."/>
            <person name="Porwollik S."/>
            <person name="Spieth J."/>
            <person name="Clifton W.S."/>
            <person name="Fulton R."/>
            <person name="Chunyan W."/>
            <person name="Wollam A."/>
            <person name="Shah N."/>
            <person name="Pepin K."/>
            <person name="Bhonagiri V."/>
            <person name="Nash W."/>
            <person name="Johnson M."/>
            <person name="Thiruvilangam P."/>
            <person name="Wilson R."/>
        </authorList>
    </citation>
    <scope>NUCLEOTIDE SEQUENCE [LARGE SCALE GENOMIC DNA]</scope>
    <source>
        <strain>ATCC BAA-731 / CDC346-86 / RSK2980</strain>
    </source>
</reference>
<accession>A9MRW5</accession>
<feature type="chain" id="PRO_1000081132" description="Ion-translocating oxidoreductase complex subunit A">
    <location>
        <begin position="1"/>
        <end position="193"/>
    </location>
</feature>
<feature type="transmembrane region" description="Helical" evidence="1">
    <location>
        <begin position="5"/>
        <end position="25"/>
    </location>
</feature>
<feature type="transmembrane region" description="Helical" evidence="1">
    <location>
        <begin position="47"/>
        <end position="67"/>
    </location>
</feature>
<feature type="transmembrane region" description="Helical" evidence="1">
    <location>
        <begin position="72"/>
        <end position="92"/>
    </location>
</feature>
<feature type="transmembrane region" description="Helical" evidence="1">
    <location>
        <begin position="102"/>
        <end position="122"/>
    </location>
</feature>
<feature type="transmembrane region" description="Helical" evidence="1">
    <location>
        <begin position="134"/>
        <end position="154"/>
    </location>
</feature>
<feature type="transmembrane region" description="Helical" evidence="1">
    <location>
        <begin position="171"/>
        <end position="191"/>
    </location>
</feature>
<name>RSXA_SALAR</name>
<organism>
    <name type="scientific">Salmonella arizonae (strain ATCC BAA-731 / CDC346-86 / RSK2980)</name>
    <dbReference type="NCBI Taxonomy" id="41514"/>
    <lineage>
        <taxon>Bacteria</taxon>
        <taxon>Pseudomonadati</taxon>
        <taxon>Pseudomonadota</taxon>
        <taxon>Gammaproteobacteria</taxon>
        <taxon>Enterobacterales</taxon>
        <taxon>Enterobacteriaceae</taxon>
        <taxon>Salmonella</taxon>
    </lineage>
</organism>
<gene>
    <name evidence="1" type="primary">rsxA</name>
    <name type="ordered locus">SARI_01522</name>
</gene>
<proteinExistence type="inferred from homology"/>
<keyword id="KW-0997">Cell inner membrane</keyword>
<keyword id="KW-1003">Cell membrane</keyword>
<keyword id="KW-0249">Electron transport</keyword>
<keyword id="KW-0472">Membrane</keyword>
<keyword id="KW-1185">Reference proteome</keyword>
<keyword id="KW-1278">Translocase</keyword>
<keyword id="KW-0812">Transmembrane</keyword>
<keyword id="KW-1133">Transmembrane helix</keyword>
<keyword id="KW-0813">Transport</keyword>
<comment type="function">
    <text evidence="1">Part of a membrane-bound complex that couples electron transfer with translocation of ions across the membrane. Required to maintain the reduced state of SoxR.</text>
</comment>
<comment type="subunit">
    <text evidence="1">The complex is composed of six subunits: RsxA, RsxB, RsxC, RsxD, RsxE and RsxG.</text>
</comment>
<comment type="subcellular location">
    <subcellularLocation>
        <location evidence="1">Cell inner membrane</location>
        <topology evidence="1">Multi-pass membrane protein</topology>
    </subcellularLocation>
</comment>
<comment type="similarity">
    <text evidence="1">Belongs to the NqrDE/RnfAE family.</text>
</comment>
<evidence type="ECO:0000255" key="1">
    <source>
        <dbReference type="HAMAP-Rule" id="MF_00459"/>
    </source>
</evidence>
<dbReference type="EC" id="7.-.-.-" evidence="1"/>
<dbReference type="EMBL" id="CP000880">
    <property type="protein sequence ID" value="ABX21418.1"/>
    <property type="molecule type" value="Genomic_DNA"/>
</dbReference>
<dbReference type="SMR" id="A9MRW5"/>
<dbReference type="STRING" id="41514.SARI_01522"/>
<dbReference type="KEGG" id="ses:SARI_01522"/>
<dbReference type="HOGENOM" id="CLU_095255_1_0_6"/>
<dbReference type="Proteomes" id="UP000002084">
    <property type="component" value="Chromosome"/>
</dbReference>
<dbReference type="GO" id="GO:0005886">
    <property type="term" value="C:plasma membrane"/>
    <property type="evidence" value="ECO:0007669"/>
    <property type="project" value="UniProtKB-SubCell"/>
</dbReference>
<dbReference type="GO" id="GO:0022900">
    <property type="term" value="P:electron transport chain"/>
    <property type="evidence" value="ECO:0007669"/>
    <property type="project" value="UniProtKB-UniRule"/>
</dbReference>
<dbReference type="HAMAP" id="MF_00459">
    <property type="entry name" value="RsxA_RnfA"/>
    <property type="match status" value="1"/>
</dbReference>
<dbReference type="InterPro" id="IPR011293">
    <property type="entry name" value="Ion_transpt_RnfA/RsxA"/>
</dbReference>
<dbReference type="InterPro" id="IPR003667">
    <property type="entry name" value="NqrDE/RnfAE"/>
</dbReference>
<dbReference type="InterPro" id="IPR050133">
    <property type="entry name" value="NqrDE/RnfAE_oxidrdctase"/>
</dbReference>
<dbReference type="NCBIfam" id="NF003481">
    <property type="entry name" value="PRK05151.1"/>
    <property type="match status" value="1"/>
</dbReference>
<dbReference type="NCBIfam" id="TIGR01943">
    <property type="entry name" value="rnfA"/>
    <property type="match status" value="1"/>
</dbReference>
<dbReference type="PANTHER" id="PTHR30335">
    <property type="entry name" value="INTEGRAL MEMBRANE PROTEIN OF SOXR-REDUCING COMPLEX"/>
    <property type="match status" value="1"/>
</dbReference>
<dbReference type="PANTHER" id="PTHR30335:SF0">
    <property type="entry name" value="ION-TRANSLOCATING OXIDOREDUCTASE COMPLEX SUBUNIT A"/>
    <property type="match status" value="1"/>
</dbReference>
<dbReference type="Pfam" id="PF02508">
    <property type="entry name" value="Rnf-Nqr"/>
    <property type="match status" value="1"/>
</dbReference>
<dbReference type="PIRSF" id="PIRSF006102">
    <property type="entry name" value="NQR_DE"/>
    <property type="match status" value="1"/>
</dbReference>